<organism>
    <name type="scientific">Pongo abelii</name>
    <name type="common">Sumatran orangutan</name>
    <name type="synonym">Pongo pygmaeus abelii</name>
    <dbReference type="NCBI Taxonomy" id="9601"/>
    <lineage>
        <taxon>Eukaryota</taxon>
        <taxon>Metazoa</taxon>
        <taxon>Chordata</taxon>
        <taxon>Craniata</taxon>
        <taxon>Vertebrata</taxon>
        <taxon>Euteleostomi</taxon>
        <taxon>Mammalia</taxon>
        <taxon>Eutheria</taxon>
        <taxon>Euarchontoglires</taxon>
        <taxon>Primates</taxon>
        <taxon>Haplorrhini</taxon>
        <taxon>Catarrhini</taxon>
        <taxon>Hominidae</taxon>
        <taxon>Pongo</taxon>
    </lineage>
</organism>
<protein>
    <recommendedName>
        <fullName>Heterogeneous nuclear ribonucleoprotein C</fullName>
        <shortName>hnRNP C</shortName>
    </recommendedName>
</protein>
<reference key="1">
    <citation type="submission" date="2004-11" db="EMBL/GenBank/DDBJ databases">
        <authorList>
            <consortium name="The German cDNA consortium"/>
        </authorList>
    </citation>
    <scope>NUCLEOTIDE SEQUENCE [LARGE SCALE MRNA]</scope>
    <source>
        <tissue>Heart</tissue>
    </source>
</reference>
<name>HNRPC_PONAB</name>
<dbReference type="EMBL" id="CR859136">
    <property type="protein sequence ID" value="CAH91328.1"/>
    <property type="molecule type" value="mRNA"/>
</dbReference>
<dbReference type="RefSeq" id="NP_001125784.1">
    <property type="nucleotide sequence ID" value="NM_001132312.2"/>
</dbReference>
<dbReference type="RefSeq" id="XP_063571237.1">
    <property type="nucleotide sequence ID" value="XM_063715167.1"/>
</dbReference>
<dbReference type="RefSeq" id="XP_063571238.1">
    <property type="nucleotide sequence ID" value="XM_063715168.1"/>
</dbReference>
<dbReference type="RefSeq" id="XP_063571239.1">
    <property type="nucleotide sequence ID" value="XM_063715169.1"/>
</dbReference>
<dbReference type="RefSeq" id="XP_063571240.1">
    <property type="nucleotide sequence ID" value="XM_063715170.1"/>
</dbReference>
<dbReference type="RefSeq" id="XP_063571241.1">
    <property type="nucleotide sequence ID" value="XM_063715171.1"/>
</dbReference>
<dbReference type="RefSeq" id="XP_063571242.1">
    <property type="nucleotide sequence ID" value="XM_063715172.1"/>
</dbReference>
<dbReference type="BMRB" id="Q5RA82"/>
<dbReference type="SMR" id="Q5RA82"/>
<dbReference type="FunCoup" id="Q5RA82">
    <property type="interactions" value="2701"/>
</dbReference>
<dbReference type="STRING" id="9601.ENSPPYP00000006361"/>
<dbReference type="Ensembl" id="ENSPPYT00000006616.2">
    <property type="protein sequence ID" value="ENSPPYP00000006361.1"/>
    <property type="gene ID" value="ENSPPYG00000005593.3"/>
</dbReference>
<dbReference type="GeneID" id="100172712"/>
<dbReference type="KEGG" id="pon:100172712"/>
<dbReference type="CTD" id="3183"/>
<dbReference type="eggNOG" id="KOG0118">
    <property type="taxonomic scope" value="Eukaryota"/>
</dbReference>
<dbReference type="GeneTree" id="ENSGT00940000153402"/>
<dbReference type="InParanoid" id="Q5RA82"/>
<dbReference type="OMA" id="RRIFFET"/>
<dbReference type="TreeFam" id="TF330974"/>
<dbReference type="Proteomes" id="UP000001595">
    <property type="component" value="Chromosome 14"/>
</dbReference>
<dbReference type="GO" id="GO:0005681">
    <property type="term" value="C:spliceosomal complex"/>
    <property type="evidence" value="ECO:0007669"/>
    <property type="project" value="UniProtKB-KW"/>
</dbReference>
<dbReference type="GO" id="GO:1990247">
    <property type="term" value="F:N6-methyladenosine-containing RNA reader activity"/>
    <property type="evidence" value="ECO:0000250"/>
    <property type="project" value="UniProtKB"/>
</dbReference>
<dbReference type="GO" id="GO:0003723">
    <property type="term" value="F:RNA binding"/>
    <property type="evidence" value="ECO:0007669"/>
    <property type="project" value="UniProtKB-KW"/>
</dbReference>
<dbReference type="GO" id="GO:0000398">
    <property type="term" value="P:mRNA splicing, via spliceosome"/>
    <property type="evidence" value="ECO:0000250"/>
    <property type="project" value="UniProtKB"/>
</dbReference>
<dbReference type="CDD" id="cd12603">
    <property type="entry name" value="RRM_hnRNPC"/>
    <property type="match status" value="1"/>
</dbReference>
<dbReference type="FunFam" id="3.30.70.330:FF:000019">
    <property type="entry name" value="heterogeneous nuclear ribonucleoproteins C1/C2 isoform X1"/>
    <property type="match status" value="1"/>
</dbReference>
<dbReference type="Gene3D" id="3.30.70.330">
    <property type="match status" value="1"/>
</dbReference>
<dbReference type="InterPro" id="IPR017347">
    <property type="entry name" value="hnRNP_C"/>
</dbReference>
<dbReference type="InterPro" id="IPR012677">
    <property type="entry name" value="Nucleotide-bd_a/b_plait_sf"/>
</dbReference>
<dbReference type="InterPro" id="IPR035979">
    <property type="entry name" value="RBD_domain_sf"/>
</dbReference>
<dbReference type="InterPro" id="IPR000504">
    <property type="entry name" value="RRM_dom"/>
</dbReference>
<dbReference type="InterPro" id="IPR051186">
    <property type="entry name" value="RRM_HNRPC/RALY_subfam"/>
</dbReference>
<dbReference type="PANTHER" id="PTHR13968">
    <property type="entry name" value="HETEROGENEOUS NUCLEAR RIBONUCLEOPROTEIN"/>
    <property type="match status" value="1"/>
</dbReference>
<dbReference type="PANTHER" id="PTHR13968:SF3">
    <property type="entry name" value="HETEROGENEOUS NUCLEAR RIBONUCLEOPROTEINS C1_C2"/>
    <property type="match status" value="1"/>
</dbReference>
<dbReference type="Pfam" id="PF00076">
    <property type="entry name" value="RRM_1"/>
    <property type="match status" value="1"/>
</dbReference>
<dbReference type="PIRSF" id="PIRSF037992">
    <property type="entry name" value="hnRNP-C_Raly"/>
    <property type="match status" value="1"/>
</dbReference>
<dbReference type="SMART" id="SM00360">
    <property type="entry name" value="RRM"/>
    <property type="match status" value="1"/>
</dbReference>
<dbReference type="SUPFAM" id="SSF54928">
    <property type="entry name" value="RNA-binding domain, RBD"/>
    <property type="match status" value="1"/>
</dbReference>
<dbReference type="PROSITE" id="PS50102">
    <property type="entry name" value="RRM"/>
    <property type="match status" value="1"/>
</dbReference>
<feature type="initiator methionine" description="Removed" evidence="1">
    <location>
        <position position="1"/>
    </location>
</feature>
<feature type="chain" id="PRO_0000239445" description="Heterogeneous nuclear ribonucleoprotein C">
    <location>
        <begin position="2"/>
        <end position="306"/>
    </location>
</feature>
<feature type="domain" description="RRM" evidence="4">
    <location>
        <begin position="16"/>
        <end position="87"/>
    </location>
</feature>
<feature type="region of interest" description="Disordered" evidence="5">
    <location>
        <begin position="139"/>
        <end position="190"/>
    </location>
</feature>
<feature type="region of interest" description="Disordered" evidence="5">
    <location>
        <begin position="221"/>
        <end position="306"/>
    </location>
</feature>
<feature type="coiled-coil region" evidence="3">
    <location>
        <begin position="190"/>
        <end position="238"/>
    </location>
</feature>
<feature type="short sequence motif" description="Nuclear localization signal" evidence="3">
    <location>
        <begin position="155"/>
        <end position="161"/>
    </location>
</feature>
<feature type="compositionally biased region" description="Low complexity" evidence="5">
    <location>
        <begin position="175"/>
        <end position="185"/>
    </location>
</feature>
<feature type="compositionally biased region" description="Basic and acidic residues" evidence="5">
    <location>
        <begin position="221"/>
        <end position="232"/>
    </location>
</feature>
<feature type="compositionally biased region" description="Basic and acidic residues" evidence="5">
    <location>
        <begin position="242"/>
        <end position="253"/>
    </location>
</feature>
<feature type="compositionally biased region" description="Acidic residues" evidence="5">
    <location>
        <begin position="255"/>
        <end position="276"/>
    </location>
</feature>
<feature type="compositionally biased region" description="Basic and acidic residues" evidence="5">
    <location>
        <begin position="277"/>
        <end position="287"/>
    </location>
</feature>
<feature type="compositionally biased region" description="Acidic residues" evidence="5">
    <location>
        <begin position="288"/>
        <end position="306"/>
    </location>
</feature>
<feature type="modified residue" description="N-acetylalanine" evidence="1">
    <location>
        <position position="2"/>
    </location>
</feature>
<feature type="modified residue" description="Phosphothreonine" evidence="1">
    <location>
        <position position="109"/>
    </location>
</feature>
<feature type="modified residue" description="Phosphoserine" evidence="1">
    <location>
        <position position="113"/>
    </location>
</feature>
<feature type="modified residue" description="Phosphoserine" evidence="1">
    <location>
        <position position="115"/>
    </location>
</feature>
<feature type="modified residue" description="Phosphoserine" evidence="2">
    <location>
        <position position="121"/>
    </location>
</feature>
<feature type="modified residue" description="Phosphoserine" evidence="1">
    <location>
        <position position="162"/>
    </location>
</feature>
<feature type="modified residue" description="Phosphoserine" evidence="1">
    <location>
        <position position="166"/>
    </location>
</feature>
<feature type="modified residue" description="N6-acetyllysine; alternate" evidence="2">
    <location>
        <position position="176"/>
    </location>
</feature>
<feature type="modified residue" description="Phosphoserine" evidence="1">
    <location>
        <position position="233"/>
    </location>
</feature>
<feature type="modified residue" description="Phosphoserine" evidence="1">
    <location>
        <position position="238"/>
    </location>
</feature>
<feature type="modified residue" description="Phosphoserine" evidence="1">
    <location>
        <position position="239"/>
    </location>
</feature>
<feature type="modified residue" description="Phosphoserine" evidence="1">
    <location>
        <position position="241"/>
    </location>
</feature>
<feature type="modified residue" description="Phosphoserine" evidence="1">
    <location>
        <position position="253"/>
    </location>
</feature>
<feature type="modified residue" description="Phosphoserine" evidence="1">
    <location>
        <position position="260"/>
    </location>
</feature>
<feature type="modified residue" description="Phosphoserine" evidence="1">
    <location>
        <position position="299"/>
    </location>
</feature>
<feature type="modified residue" description="Phosphoserine" evidence="1">
    <location>
        <position position="306"/>
    </location>
</feature>
<feature type="cross-link" description="Glycyl lysine isopeptide (Lys-Gly) (interchain with G-Cter in SUMO2)" evidence="1">
    <location>
        <position position="8"/>
    </location>
</feature>
<feature type="cross-link" description="Glycyl lysine isopeptide (Lys-Gly) (interchain with G-Cter in SUMO2)" evidence="1">
    <location>
        <position position="50"/>
    </location>
</feature>
<feature type="cross-link" description="Glycyl lysine isopeptide (Lys-Gly) (interchain with G-Cter in SUMO2)" evidence="1">
    <location>
        <position position="89"/>
    </location>
</feature>
<feature type="cross-link" description="Glycyl lysine isopeptide (Lys-Gly) (interchain with G-Cter in SUMO2)" evidence="1">
    <location>
        <position position="94"/>
    </location>
</feature>
<feature type="cross-link" description="Glycyl lysine isopeptide (Lys-Gly) (interchain with G-Cter in SUMO2); alternate" evidence="1">
    <location>
        <position position="176"/>
    </location>
</feature>
<feature type="cross-link" description="Glycyl lysine isopeptide (Lys-Gly) (interchain with G-Cter in SUMO2)" evidence="1">
    <location>
        <position position="223"/>
    </location>
</feature>
<feature type="cross-link" description="Glycyl lysine isopeptide (Lys-Gly) (interchain with G-Cter in SUMO2)" evidence="1">
    <location>
        <position position="229"/>
    </location>
</feature>
<feature type="cross-link" description="Glycyl lysine isopeptide (Lys-Gly) (interchain with G-Cter in SUMO1); alternate" evidence="1">
    <location>
        <position position="232"/>
    </location>
</feature>
<feature type="cross-link" description="Glycyl lysine isopeptide (Lys-Gly) (interchain with G-Cter in SUMO2); alternate" evidence="1">
    <location>
        <position position="232"/>
    </location>
</feature>
<feature type="cross-link" description="Glycyl lysine isopeptide (Lys-Gly) (interchain with G-Cter in SUMO2)" evidence="1">
    <location>
        <position position="243"/>
    </location>
</feature>
<feature type="cross-link" description="Glycyl lysine isopeptide (Lys-Gly) (interchain with G-Cter in SUMO2)" evidence="1">
    <location>
        <position position="244"/>
    </location>
</feature>
<feature type="cross-link" description="Glycyl lysine isopeptide (Lys-Gly) (interchain with G-Cter in SUMO); alternate" evidence="1">
    <location>
        <position position="250"/>
    </location>
</feature>
<feature type="cross-link" description="Glycyl lysine isopeptide (Lys-Gly) (interchain with G-Cter in SUMO2); alternate" evidence="1">
    <location>
        <position position="250"/>
    </location>
</feature>
<proteinExistence type="evidence at transcript level"/>
<accession>Q5RA82</accession>
<keyword id="KW-0007">Acetylation</keyword>
<keyword id="KW-0175">Coiled coil</keyword>
<keyword id="KW-1017">Isopeptide bond</keyword>
<keyword id="KW-0507">mRNA processing</keyword>
<keyword id="KW-0508">mRNA splicing</keyword>
<keyword id="KW-0539">Nucleus</keyword>
<keyword id="KW-0597">Phosphoprotein</keyword>
<keyword id="KW-1185">Reference proteome</keyword>
<keyword id="KW-0687">Ribonucleoprotein</keyword>
<keyword id="KW-0694">RNA-binding</keyword>
<keyword id="KW-0747">Spliceosome</keyword>
<keyword id="KW-0832">Ubl conjugation</keyword>
<gene>
    <name type="primary">HNRNPC</name>
    <name type="synonym">HNRPC</name>
</gene>
<sequence length="306" mass="33670">MASNVTNKTDPRSMNSRVFIGNLNTLVVKKSDVEAIFSKYGKIVGCSVHKGFAFVQYVNERNARAAVAGEDGRMIAGQVLDINLAAEPKVNRGKAGVKRSAAEMYGSVTEHPSPSPLLSSSFDLDYDFQRDYYDRMYSYPARVPPPPPIARAVVPSKRQRVSGNTSRRGKSGFNSKSGQRGSSKSGKLKGDDLQAIKKELTQIKQKVDSLLENLEKIEKEQSKQAVEMKNDKSEEEQSSSSVKKDETNVKMESEGGADDSAEEGDLLDDDDNEDRGDDQLELIKDDEKEAEEGEDDRDSANGEDDS</sequence>
<evidence type="ECO:0000250" key="1">
    <source>
        <dbReference type="UniProtKB" id="P07910"/>
    </source>
</evidence>
<evidence type="ECO:0000250" key="2">
    <source>
        <dbReference type="UniProtKB" id="Q9Z204"/>
    </source>
</evidence>
<evidence type="ECO:0000255" key="3"/>
<evidence type="ECO:0000255" key="4">
    <source>
        <dbReference type="PROSITE-ProRule" id="PRU00176"/>
    </source>
</evidence>
<evidence type="ECO:0000256" key="5">
    <source>
        <dbReference type="SAM" id="MobiDB-lite"/>
    </source>
</evidence>
<evidence type="ECO:0000305" key="6"/>
<comment type="function">
    <text evidence="1">Binds pre-mRNA and nucleates the assembly of 40S hnRNP particles. Interacts with poly-U tracts in the 3'-UTR or 5'-UTR of mRNA and modulates the stability and the level of translation of bound mRNA molecules. Single HNRNPC tetramers bind 230-240 nucleotides. Trimers of HNRNPC tetramers bind 700 nucleotides. May play a role in the early steps of spliceosome assembly and pre-mRNA splicing. N6-methyladenosine (m6A) has been shown to alter the local structure in mRNAs and long non-coding RNAs (lncRNAs) via a mechanism named 'm(6)A-switch', facilitating binding of HNRNPC, leading to regulation of mRNA splicing.</text>
</comment>
<comment type="subunit">
    <text evidence="1">Tetramer composed of 3 copies of isoform C1 and 1 copy of isoform C2. Assembly of 3 tetramers with bound pre-mRNA gives rise to a 19S complex that interacts with HNRNPA2B1 tetramers. Component of the 40S hnRNP particle. Identified in the spliceosome C complex. Interacts with IGF2BP1 (By similarity). Interacts with PPIA/CYPA (By similarity).</text>
</comment>
<comment type="subcellular location">
    <subcellularLocation>
        <location evidence="1">Nucleus</location>
    </subcellularLocation>
    <text evidence="1">Component of ribonucleosomes.</text>
</comment>
<comment type="PTM">
    <text evidence="1">Phosphorylated on Ser-260 and Ser-299 in resting cells.</text>
</comment>
<comment type="PTM">
    <text evidence="1">Sumoylated. Sumoylation reduces affinity for mRNA.</text>
</comment>
<comment type="PTM">
    <text evidence="1">Ubiquitinated and degraded after nucleo-cytoplasmic transport by YWHAE.</text>
</comment>
<comment type="similarity">
    <text evidence="6">Belongs to the RRM HNRPC family. RALY subfamily.</text>
</comment>